<gene>
    <name type="primary">MAD2L2</name>
    <name type="synonym">MAD2B</name>
    <name type="synonym">REV7</name>
</gene>
<feature type="chain" id="PRO_0000126119" description="Mitotic spindle assembly checkpoint protein MAD2B">
    <location>
        <begin position="1"/>
        <end position="211"/>
    </location>
</feature>
<feature type="domain" description="HORMA" evidence="1">
    <location>
        <begin position="13"/>
        <end position="203"/>
    </location>
</feature>
<feature type="region of interest" description="Mediates interaction with REV1 and REV3L and homodimerization">
    <location>
        <begin position="21"/>
        <end position="155"/>
    </location>
</feature>
<feature type="region of interest" description="Mediates interaction with ipaB">
    <location>
        <begin position="150"/>
        <end position="211"/>
    </location>
</feature>
<feature type="sequence variant" id="VAR_077981" description="In FANCV; drastically reduced protein abundance; dbSNP:rs1057517674." evidence="17">
    <original>V</original>
    <variation>E</variation>
    <location>
        <position position="85"/>
    </location>
</feature>
<feature type="mutagenesis site" description="Alters interaction with REV3L. Loss of interaction with REV3L; when associated with A-171." evidence="13">
    <original>Y</original>
    <variation>A</variation>
    <location>
        <position position="63"/>
    </location>
</feature>
<feature type="mutagenesis site" description="Induces structural changes that increase affinity for REV3L and REV1. No effect on interaction with REV1; when associated with A-171." evidence="13">
    <original>R</original>
    <variation>A</variation>
    <location>
        <position position="124"/>
    </location>
</feature>
<feature type="mutagenesis site" description="Alters interaction with REV3L and REV1. Loss of interaction with REV3L; when associated with A-63. No effect on interaction with REV1; when associated with A-124." evidence="13">
    <original>W</original>
    <variation>A</variation>
    <location>
        <position position="171"/>
    </location>
</feature>
<feature type="mutagenesis site" description="Significantly prevents interaction with REV1; no effect on interaction with REV3L." evidence="13">
    <original>L</original>
    <variation>A</variation>
    <location>
        <position position="186"/>
    </location>
</feature>
<feature type="mutagenesis site" description="Significantly prevents interaction with REV1; no effect on interaction with REV3L." evidence="13">
    <original>Q</original>
    <variation>A</variation>
    <location>
        <position position="200"/>
    </location>
</feature>
<feature type="mutagenesis site" description="Significantly prevents interaction with REV1; no effect on interaction with REV3L." evidence="13">
    <original>Y</original>
    <variation>A</variation>
    <location>
        <position position="202"/>
    </location>
</feature>
<feature type="sequence conflict" description="In Ref. 3; AAD30290." evidence="21" ref="3">
    <original>D</original>
    <variation>A</variation>
    <location>
        <position position="17"/>
    </location>
</feature>
<feature type="sequence conflict" description="In Ref. 2; AAF20267." evidence="21" ref="2">
    <original>E</original>
    <variation>D</variation>
    <location>
        <position position="96"/>
    </location>
</feature>
<feature type="sequence conflict" description="In Ref. 2; AAF20267." evidence="21" ref="2">
    <original>M</original>
    <variation>V</variation>
    <location>
        <position position="199"/>
    </location>
</feature>
<feature type="helix" evidence="24">
    <location>
        <begin position="6"/>
        <end position="8"/>
    </location>
</feature>
<feature type="helix" evidence="24">
    <location>
        <begin position="10"/>
        <end position="12"/>
    </location>
</feature>
<feature type="helix" evidence="24">
    <location>
        <begin position="13"/>
        <end position="33"/>
    </location>
</feature>
<feature type="helix" evidence="24">
    <location>
        <begin position="39"/>
        <end position="41"/>
    </location>
</feature>
<feature type="strand" evidence="24">
    <location>
        <begin position="42"/>
        <end position="47"/>
    </location>
</feature>
<feature type="strand" evidence="24">
    <location>
        <begin position="50"/>
        <end position="55"/>
    </location>
</feature>
<feature type="helix" evidence="24">
    <location>
        <begin position="58"/>
        <end position="76"/>
    </location>
</feature>
<feature type="strand" evidence="24">
    <location>
        <begin position="80"/>
        <end position="88"/>
    </location>
</feature>
<feature type="strand" evidence="22">
    <location>
        <begin position="90"/>
        <end position="92"/>
    </location>
</feature>
<feature type="strand" evidence="24">
    <location>
        <begin position="94"/>
        <end position="103"/>
    </location>
</feature>
<feature type="turn" evidence="23">
    <location>
        <begin position="106"/>
        <end position="111"/>
    </location>
</feature>
<feature type="strand" evidence="25">
    <location>
        <begin position="112"/>
        <end position="114"/>
    </location>
</feature>
<feature type="turn" evidence="24">
    <location>
        <begin position="115"/>
        <end position="118"/>
    </location>
</feature>
<feature type="helix" evidence="24">
    <location>
        <begin position="119"/>
        <end position="131"/>
    </location>
</feature>
<feature type="helix" evidence="24">
    <location>
        <begin position="133"/>
        <end position="135"/>
    </location>
</feature>
<feature type="strand" evidence="24">
    <location>
        <begin position="145"/>
        <end position="155"/>
    </location>
</feature>
<feature type="helix" evidence="25">
    <location>
        <begin position="156"/>
        <end position="159"/>
    </location>
</feature>
<feature type="strand" evidence="24">
    <location>
        <begin position="162"/>
        <end position="166"/>
    </location>
</feature>
<feature type="strand" evidence="24">
    <location>
        <begin position="169"/>
        <end position="173"/>
    </location>
</feature>
<feature type="helix" evidence="24">
    <location>
        <begin position="176"/>
        <end position="179"/>
    </location>
</feature>
<feature type="strand" evidence="24">
    <location>
        <begin position="185"/>
        <end position="196"/>
    </location>
</feature>
<feature type="strand" evidence="24">
    <location>
        <begin position="198"/>
        <end position="205"/>
    </location>
</feature>
<proteinExistence type="evidence at protein level"/>
<protein>
    <recommendedName>
        <fullName>Mitotic spindle assembly checkpoint protein MAD2B</fullName>
    </recommendedName>
    <alternativeName>
        <fullName>Mitotic arrest deficient 2-like protein 2</fullName>
        <shortName>MAD2-like protein 2</shortName>
    </alternativeName>
    <alternativeName>
        <fullName>REV7 homolog</fullName>
        <shortName>hREV7</shortName>
    </alternativeName>
</protein>
<sequence length="211" mass="24334">MTTLTRQDLNFGQVVADVLCEFLEVAVHLILYVREVYPVGIFQKRKKYNVPVQMSCHPELNQYIQDTLHCVKPLLEKNDVEKVVVVILDKEHRPVEKFVFEITQPPLLSISSDSLLSHVEQLLRAFILKISVCDAVLDHNPPGCTFTVLVHTREAATRNMEKIQVIKDFPWILADEQDVHMHDPRLIPLKTMTSDILKMQLYVEERAHKGS</sequence>
<reference key="1">
    <citation type="journal article" date="1999" name="Biochem. J.">
        <title>Evidence for an interaction of the metalloprotease-disintegrin tumour necrosis factor alpha convertase (TACE) with mitotic arrest deficient 2 (MAD2), and of the metalloprotease-disintegrin MDC9 with a novel MAD2-related protein, MAD2-beta.</title>
        <authorList>
            <person name="Nelson K.K."/>
            <person name="Schlondorff J."/>
            <person name="Blobel C.P."/>
        </authorList>
    </citation>
    <scope>NUCLEOTIDE SEQUENCE [MRNA]</scope>
    <scope>INTERACTION WITH ADAM9</scope>
</reference>
<reference key="2">
    <citation type="submission" date="1999-12" db="EMBL/GenBank/DDBJ databases">
        <title>Identification of a novel human homolog of the MAD2 protein that interacts with the h-warts protein.</title>
        <authorList>
            <person name="Hirota T."/>
            <person name="Nakamura H."/>
            <person name="Tada K."/>
            <person name="Marumoto T."/>
            <person name="Saya H."/>
        </authorList>
    </citation>
    <scope>NUCLEOTIDE SEQUENCE [MRNA]</scope>
</reference>
<reference key="3">
    <citation type="journal article" date="1999" name="Genomics">
        <title>Characterization of MAD2B and other mitotic spindle checkpoint genes.</title>
        <authorList>
            <person name="Cahill D.P."/>
            <person name="da Costa L.T."/>
            <person name="Carson-Walter E.B."/>
            <person name="Kinzler K.W."/>
            <person name="Vogelstein B."/>
            <person name="Lengauer C."/>
        </authorList>
    </citation>
    <scope>NUCLEOTIDE SEQUENCE [MRNA]</scope>
</reference>
<reference key="4">
    <citation type="journal article" date="2000" name="J. Biol. Chem.">
        <title>A human REV7 homolog that interacts with the polymerase zeta catalytic subunit hREV3 and the spindle assembly checkpoint protein hMAD2.</title>
        <authorList>
            <person name="Murakumo Y."/>
            <person name="Roth T."/>
            <person name="Ishii H."/>
            <person name="Rasio D."/>
            <person name="Numata S."/>
            <person name="Croce C.M."/>
            <person name="Fishel R."/>
        </authorList>
    </citation>
    <scope>NUCLEOTIDE SEQUENCE [MRNA]</scope>
    <scope>INTERACTION WITH REV3L</scope>
</reference>
<reference key="5">
    <citation type="journal article" date="2004" name="Nat. Genet.">
        <title>Complete sequencing and characterization of 21,243 full-length human cDNAs.</title>
        <authorList>
            <person name="Ota T."/>
            <person name="Suzuki Y."/>
            <person name="Nishikawa T."/>
            <person name="Otsuki T."/>
            <person name="Sugiyama T."/>
            <person name="Irie R."/>
            <person name="Wakamatsu A."/>
            <person name="Hayashi K."/>
            <person name="Sato H."/>
            <person name="Nagai K."/>
            <person name="Kimura K."/>
            <person name="Makita H."/>
            <person name="Sekine M."/>
            <person name="Obayashi M."/>
            <person name="Nishi T."/>
            <person name="Shibahara T."/>
            <person name="Tanaka T."/>
            <person name="Ishii S."/>
            <person name="Yamamoto J."/>
            <person name="Saito K."/>
            <person name="Kawai Y."/>
            <person name="Isono Y."/>
            <person name="Nakamura Y."/>
            <person name="Nagahari K."/>
            <person name="Murakami K."/>
            <person name="Yasuda T."/>
            <person name="Iwayanagi T."/>
            <person name="Wagatsuma M."/>
            <person name="Shiratori A."/>
            <person name="Sudo H."/>
            <person name="Hosoiri T."/>
            <person name="Kaku Y."/>
            <person name="Kodaira H."/>
            <person name="Kondo H."/>
            <person name="Sugawara M."/>
            <person name="Takahashi M."/>
            <person name="Kanda K."/>
            <person name="Yokoi T."/>
            <person name="Furuya T."/>
            <person name="Kikkawa E."/>
            <person name="Omura Y."/>
            <person name="Abe K."/>
            <person name="Kamihara K."/>
            <person name="Katsuta N."/>
            <person name="Sato K."/>
            <person name="Tanikawa M."/>
            <person name="Yamazaki M."/>
            <person name="Ninomiya K."/>
            <person name="Ishibashi T."/>
            <person name="Yamashita H."/>
            <person name="Murakawa K."/>
            <person name="Fujimori K."/>
            <person name="Tanai H."/>
            <person name="Kimata M."/>
            <person name="Watanabe M."/>
            <person name="Hiraoka S."/>
            <person name="Chiba Y."/>
            <person name="Ishida S."/>
            <person name="Ono Y."/>
            <person name="Takiguchi S."/>
            <person name="Watanabe S."/>
            <person name="Yosida M."/>
            <person name="Hotuta T."/>
            <person name="Kusano J."/>
            <person name="Kanehori K."/>
            <person name="Takahashi-Fujii A."/>
            <person name="Hara H."/>
            <person name="Tanase T.-O."/>
            <person name="Nomura Y."/>
            <person name="Togiya S."/>
            <person name="Komai F."/>
            <person name="Hara R."/>
            <person name="Takeuchi K."/>
            <person name="Arita M."/>
            <person name="Imose N."/>
            <person name="Musashino K."/>
            <person name="Yuuki H."/>
            <person name="Oshima A."/>
            <person name="Sasaki N."/>
            <person name="Aotsuka S."/>
            <person name="Yoshikawa Y."/>
            <person name="Matsunawa H."/>
            <person name="Ichihara T."/>
            <person name="Shiohata N."/>
            <person name="Sano S."/>
            <person name="Moriya S."/>
            <person name="Momiyama H."/>
            <person name="Satoh N."/>
            <person name="Takami S."/>
            <person name="Terashima Y."/>
            <person name="Suzuki O."/>
            <person name="Nakagawa S."/>
            <person name="Senoh A."/>
            <person name="Mizoguchi H."/>
            <person name="Goto Y."/>
            <person name="Shimizu F."/>
            <person name="Wakebe H."/>
            <person name="Hishigaki H."/>
            <person name="Watanabe T."/>
            <person name="Sugiyama A."/>
            <person name="Takemoto M."/>
            <person name="Kawakami B."/>
            <person name="Yamazaki M."/>
            <person name="Watanabe K."/>
            <person name="Kumagai A."/>
            <person name="Itakura S."/>
            <person name="Fukuzumi Y."/>
            <person name="Fujimori Y."/>
            <person name="Komiyama M."/>
            <person name="Tashiro H."/>
            <person name="Tanigami A."/>
            <person name="Fujiwara T."/>
            <person name="Ono T."/>
            <person name="Yamada K."/>
            <person name="Fujii Y."/>
            <person name="Ozaki K."/>
            <person name="Hirao M."/>
            <person name="Ohmori Y."/>
            <person name="Kawabata A."/>
            <person name="Hikiji T."/>
            <person name="Kobatake N."/>
            <person name="Inagaki H."/>
            <person name="Ikema Y."/>
            <person name="Okamoto S."/>
            <person name="Okitani R."/>
            <person name="Kawakami T."/>
            <person name="Noguchi S."/>
            <person name="Itoh T."/>
            <person name="Shigeta K."/>
            <person name="Senba T."/>
            <person name="Matsumura K."/>
            <person name="Nakajima Y."/>
            <person name="Mizuno T."/>
            <person name="Morinaga M."/>
            <person name="Sasaki M."/>
            <person name="Togashi T."/>
            <person name="Oyama M."/>
            <person name="Hata H."/>
            <person name="Watanabe M."/>
            <person name="Komatsu T."/>
            <person name="Mizushima-Sugano J."/>
            <person name="Satoh T."/>
            <person name="Shirai Y."/>
            <person name="Takahashi Y."/>
            <person name="Nakagawa K."/>
            <person name="Okumura K."/>
            <person name="Nagase T."/>
            <person name="Nomura N."/>
            <person name="Kikuchi H."/>
            <person name="Masuho Y."/>
            <person name="Yamashita R."/>
            <person name="Nakai K."/>
            <person name="Yada T."/>
            <person name="Nakamura Y."/>
            <person name="Ohara O."/>
            <person name="Isogai T."/>
            <person name="Sugano S."/>
        </authorList>
    </citation>
    <scope>NUCLEOTIDE SEQUENCE [LARGE SCALE MRNA]</scope>
    <source>
        <tissue>Cerebellum</tissue>
        <tissue>Embryo</tissue>
    </source>
</reference>
<reference key="6">
    <citation type="submission" date="2005-04" db="EMBL/GenBank/DDBJ databases">
        <authorList>
            <consortium name="NIEHS SNPs program"/>
        </authorList>
    </citation>
    <scope>NUCLEOTIDE SEQUENCE [GENOMIC DNA]</scope>
</reference>
<reference key="7">
    <citation type="journal article" date="2006" name="Nature">
        <title>The DNA sequence and biological annotation of human chromosome 1.</title>
        <authorList>
            <person name="Gregory S.G."/>
            <person name="Barlow K.F."/>
            <person name="McLay K.E."/>
            <person name="Kaul R."/>
            <person name="Swarbreck D."/>
            <person name="Dunham A."/>
            <person name="Scott C.E."/>
            <person name="Howe K.L."/>
            <person name="Woodfine K."/>
            <person name="Spencer C.C.A."/>
            <person name="Jones M.C."/>
            <person name="Gillson C."/>
            <person name="Searle S."/>
            <person name="Zhou Y."/>
            <person name="Kokocinski F."/>
            <person name="McDonald L."/>
            <person name="Evans R."/>
            <person name="Phillips K."/>
            <person name="Atkinson A."/>
            <person name="Cooper R."/>
            <person name="Jones C."/>
            <person name="Hall R.E."/>
            <person name="Andrews T.D."/>
            <person name="Lloyd C."/>
            <person name="Ainscough R."/>
            <person name="Almeida J.P."/>
            <person name="Ambrose K.D."/>
            <person name="Anderson F."/>
            <person name="Andrew R.W."/>
            <person name="Ashwell R.I.S."/>
            <person name="Aubin K."/>
            <person name="Babbage A.K."/>
            <person name="Bagguley C.L."/>
            <person name="Bailey J."/>
            <person name="Beasley H."/>
            <person name="Bethel G."/>
            <person name="Bird C.P."/>
            <person name="Bray-Allen S."/>
            <person name="Brown J.Y."/>
            <person name="Brown A.J."/>
            <person name="Buckley D."/>
            <person name="Burton J."/>
            <person name="Bye J."/>
            <person name="Carder C."/>
            <person name="Chapman J.C."/>
            <person name="Clark S.Y."/>
            <person name="Clarke G."/>
            <person name="Clee C."/>
            <person name="Cobley V."/>
            <person name="Collier R.E."/>
            <person name="Corby N."/>
            <person name="Coville G.J."/>
            <person name="Davies J."/>
            <person name="Deadman R."/>
            <person name="Dunn M."/>
            <person name="Earthrowl M."/>
            <person name="Ellington A.G."/>
            <person name="Errington H."/>
            <person name="Frankish A."/>
            <person name="Frankland J."/>
            <person name="French L."/>
            <person name="Garner P."/>
            <person name="Garnett J."/>
            <person name="Gay L."/>
            <person name="Ghori M.R.J."/>
            <person name="Gibson R."/>
            <person name="Gilby L.M."/>
            <person name="Gillett W."/>
            <person name="Glithero R.J."/>
            <person name="Grafham D.V."/>
            <person name="Griffiths C."/>
            <person name="Griffiths-Jones S."/>
            <person name="Grocock R."/>
            <person name="Hammond S."/>
            <person name="Harrison E.S.I."/>
            <person name="Hart E."/>
            <person name="Haugen E."/>
            <person name="Heath P.D."/>
            <person name="Holmes S."/>
            <person name="Holt K."/>
            <person name="Howden P.J."/>
            <person name="Hunt A.R."/>
            <person name="Hunt S.E."/>
            <person name="Hunter G."/>
            <person name="Isherwood J."/>
            <person name="James R."/>
            <person name="Johnson C."/>
            <person name="Johnson D."/>
            <person name="Joy A."/>
            <person name="Kay M."/>
            <person name="Kershaw J.K."/>
            <person name="Kibukawa M."/>
            <person name="Kimberley A.M."/>
            <person name="King A."/>
            <person name="Knights A.J."/>
            <person name="Lad H."/>
            <person name="Laird G."/>
            <person name="Lawlor S."/>
            <person name="Leongamornlert D.A."/>
            <person name="Lloyd D.M."/>
            <person name="Loveland J."/>
            <person name="Lovell J."/>
            <person name="Lush M.J."/>
            <person name="Lyne R."/>
            <person name="Martin S."/>
            <person name="Mashreghi-Mohammadi M."/>
            <person name="Matthews L."/>
            <person name="Matthews N.S.W."/>
            <person name="McLaren S."/>
            <person name="Milne S."/>
            <person name="Mistry S."/>
            <person name="Moore M.J.F."/>
            <person name="Nickerson T."/>
            <person name="O'Dell C.N."/>
            <person name="Oliver K."/>
            <person name="Palmeiri A."/>
            <person name="Palmer S.A."/>
            <person name="Parker A."/>
            <person name="Patel D."/>
            <person name="Pearce A.V."/>
            <person name="Peck A.I."/>
            <person name="Pelan S."/>
            <person name="Phelps K."/>
            <person name="Phillimore B.J."/>
            <person name="Plumb R."/>
            <person name="Rajan J."/>
            <person name="Raymond C."/>
            <person name="Rouse G."/>
            <person name="Saenphimmachak C."/>
            <person name="Sehra H.K."/>
            <person name="Sheridan E."/>
            <person name="Shownkeen R."/>
            <person name="Sims S."/>
            <person name="Skuce C.D."/>
            <person name="Smith M."/>
            <person name="Steward C."/>
            <person name="Subramanian S."/>
            <person name="Sycamore N."/>
            <person name="Tracey A."/>
            <person name="Tromans A."/>
            <person name="Van Helmond Z."/>
            <person name="Wall M."/>
            <person name="Wallis J.M."/>
            <person name="White S."/>
            <person name="Whitehead S.L."/>
            <person name="Wilkinson J.E."/>
            <person name="Willey D.L."/>
            <person name="Williams H."/>
            <person name="Wilming L."/>
            <person name="Wray P.W."/>
            <person name="Wu Z."/>
            <person name="Coulson A."/>
            <person name="Vaudin M."/>
            <person name="Sulston J.E."/>
            <person name="Durbin R.M."/>
            <person name="Hubbard T."/>
            <person name="Wooster R."/>
            <person name="Dunham I."/>
            <person name="Carter N.P."/>
            <person name="McVean G."/>
            <person name="Ross M.T."/>
            <person name="Harrow J."/>
            <person name="Olson M.V."/>
            <person name="Beck S."/>
            <person name="Rogers J."/>
            <person name="Bentley D.R."/>
        </authorList>
    </citation>
    <scope>NUCLEOTIDE SEQUENCE [LARGE SCALE GENOMIC DNA]</scope>
</reference>
<reference key="8">
    <citation type="submission" date="2005-07" db="EMBL/GenBank/DDBJ databases">
        <authorList>
            <person name="Mural R.J."/>
            <person name="Istrail S."/>
            <person name="Sutton G.G."/>
            <person name="Florea L."/>
            <person name="Halpern A.L."/>
            <person name="Mobarry C.M."/>
            <person name="Lippert R."/>
            <person name="Walenz B."/>
            <person name="Shatkay H."/>
            <person name="Dew I."/>
            <person name="Miller J.R."/>
            <person name="Flanigan M.J."/>
            <person name="Edwards N.J."/>
            <person name="Bolanos R."/>
            <person name="Fasulo D."/>
            <person name="Halldorsson B.V."/>
            <person name="Hannenhalli S."/>
            <person name="Turner R."/>
            <person name="Yooseph S."/>
            <person name="Lu F."/>
            <person name="Nusskern D.R."/>
            <person name="Shue B.C."/>
            <person name="Zheng X.H."/>
            <person name="Zhong F."/>
            <person name="Delcher A.L."/>
            <person name="Huson D.H."/>
            <person name="Kravitz S.A."/>
            <person name="Mouchard L."/>
            <person name="Reinert K."/>
            <person name="Remington K.A."/>
            <person name="Clark A.G."/>
            <person name="Waterman M.S."/>
            <person name="Eichler E.E."/>
            <person name="Adams M.D."/>
            <person name="Hunkapiller M.W."/>
            <person name="Myers E.W."/>
            <person name="Venter J.C."/>
        </authorList>
    </citation>
    <scope>NUCLEOTIDE SEQUENCE [LARGE SCALE GENOMIC DNA]</scope>
</reference>
<reference key="9">
    <citation type="journal article" date="2004" name="Genome Res.">
        <title>The status, quality, and expansion of the NIH full-length cDNA project: the Mammalian Gene Collection (MGC).</title>
        <authorList>
            <consortium name="The MGC Project Team"/>
        </authorList>
    </citation>
    <scope>NUCLEOTIDE SEQUENCE [LARGE SCALE MRNA]</scope>
    <source>
        <tissue>Skin</tissue>
    </source>
</reference>
<reference key="10">
    <citation type="journal article" date="2001" name="Genes Dev.">
        <title>Inhibition of Cdh1-APC by the MAD2-related protein MAD2L2: a novel mechanism for regulating Cdh1.</title>
        <authorList>
            <person name="Pfleger C.M."/>
            <person name="Salic A."/>
            <person name="Lee E."/>
            <person name="Kirschner M.W."/>
        </authorList>
    </citation>
    <scope>FUNCTION</scope>
    <scope>INTERACTION WITH FZR1</scope>
</reference>
<reference key="11">
    <citation type="journal article" date="2001" name="Genes Dev.">
        <title>MAD2B is an inhibitor of the anaphase-promoting complex.</title>
        <authorList>
            <person name="Chen J."/>
            <person name="Fang G."/>
        </authorList>
    </citation>
    <scope>FUNCTION</scope>
    <scope>INTERACTION WITH FZR1 AND CDC20</scope>
</reference>
<reference key="12">
    <citation type="journal article" date="2001" name="J. Biol. Chem.">
        <title>Interactions in the error-prone postreplication repair proteins hREV1, hREV3, and hREV7.</title>
        <authorList>
            <person name="Murakumo Y."/>
            <person name="Ogura Y."/>
            <person name="Ishii H."/>
            <person name="Numata S."/>
            <person name="Ichihara M."/>
            <person name="Croce C.M."/>
            <person name="Fishel R."/>
            <person name="Takahashi M."/>
        </authorList>
    </citation>
    <scope>INTERACTION WITH REV1 AND REV3L</scope>
    <scope>HOMOOLIGOMERIZATION</scope>
</reference>
<reference key="13">
    <citation type="journal article" date="2001" name="Proc. Natl. Acad. Sci. U.S.A.">
        <title>Impairment of MAD2B-PRCC interaction in mitotic checkpoint defective t(X;1)-positive renal cell carcinomas.</title>
        <authorList>
            <person name="Weterman M.A."/>
            <person name="van Groningen J.J."/>
            <person name="Tertoolen L."/>
            <person name="van Kessel A.G."/>
        </authorList>
    </citation>
    <scope>INTERACTION WITH PRCC</scope>
    <scope>TISSUE SPECIFICITY</scope>
    <scope>SUBCELLULAR LOCATION</scope>
</reference>
<reference key="14">
    <citation type="journal article" date="2007" name="Cell">
        <title>A bacterial effector targets Mad2L2, an APC inhibitor, to modulate host cell cycling.</title>
        <authorList>
            <person name="Iwai H."/>
            <person name="Kim M."/>
            <person name="Yoshikawa Y."/>
            <person name="Ashida H."/>
            <person name="Ogawa M."/>
            <person name="Fujita Y."/>
            <person name="Muller D."/>
            <person name="Kirikae T."/>
            <person name="Jackson P.K."/>
            <person name="Kotani S."/>
            <person name="Sasakawa C."/>
        </authorList>
    </citation>
    <scope>FUNCTION IN APC REGULATION</scope>
    <scope>INTERACTION WITH SHIGELLA FLEXNERI IPAB; FZR1 AND CDC20</scope>
    <scope>SUBCELLULAR LOCATION</scope>
</reference>
<reference key="15">
    <citation type="journal article" date="2007" name="Mol. Cell. Biochem.">
        <title>Hepatocellular carcinoma-associated gene 2 interacts with MAD2L2.</title>
        <authorList>
            <person name="Li L."/>
            <person name="Shi Y."/>
            <person name="Wu H."/>
            <person name="Wan B."/>
            <person name="Li P."/>
            <person name="Zhou L."/>
            <person name="Shi H."/>
            <person name="Huo K."/>
        </authorList>
    </citation>
    <scope>INTERACTION WITH YY1AP1</scope>
    <scope>SUBCELLULAR LOCATION</scope>
</reference>
<reference key="16">
    <citation type="journal article" date="2007" name="Mol. Cell. Biol.">
        <title>Rev7/MAD2B links c-Jun N-terminal protein kinase pathway signaling to activation of the transcription factor Elk-1.</title>
        <authorList>
            <person name="Zhang L."/>
            <person name="Yang S.H."/>
            <person name="Sharrocks A.D."/>
        </authorList>
    </citation>
    <scope>FUNCTION</scope>
    <scope>INTERACTION WITH ELK1 AND JNK KINASES</scope>
</reference>
<reference key="17">
    <citation type="journal article" date="2009" name="J. Biol. Chem.">
        <title>MAD2B, a novel TCF4-binding protein, modulates TCF4-mediated epithelial-mesenchymal transdifferentiation.</title>
        <authorList>
            <person name="Hong C.F."/>
            <person name="Chou Y.T."/>
            <person name="Lin Y.S."/>
            <person name="Wu C.W."/>
        </authorList>
    </citation>
    <scope>FUNCTION</scope>
    <scope>INTERACTION WITH TCF7L2</scope>
</reference>
<reference key="18">
    <citation type="journal article" date="2009" name="PLoS ONE">
        <title>The mitotic arrest deficient protein MAD2B interacts with the small GTPase RAN throughout the cell cycle.</title>
        <authorList>
            <person name="Medendorp K."/>
            <person name="van Groningen J.J."/>
            <person name="Vreede L."/>
            <person name="Hetterschijt L."/>
            <person name="van den Hurk W.H."/>
            <person name="de Bruijn D.R."/>
            <person name="Brugmans L."/>
            <person name="van Kessel A.G."/>
        </authorList>
    </citation>
    <scope>INTERACTION WITH RAN</scope>
    <scope>SUBCELLULAR LOCATION</scope>
</reference>
<reference key="19">
    <citation type="journal article" date="2010" name="Cell">
        <title>Quantitative interaction proteomics and genome-wide profiling of epigenetic histone marks and their readers.</title>
        <authorList>
            <person name="Vermeulen M."/>
            <person name="Eberl H.C."/>
            <person name="Matarese F."/>
            <person name="Marks H."/>
            <person name="Denissov S."/>
            <person name="Butter F."/>
            <person name="Lee K.K."/>
            <person name="Olsen J.V."/>
            <person name="Hyman A.A."/>
            <person name="Stunnenberg H.G."/>
            <person name="Mann M."/>
        </authorList>
    </citation>
    <scope>INTERACTION WITH POGZ</scope>
</reference>
<reference key="20">
    <citation type="journal article" date="2011" name="EMBO J.">
        <title>CAMP (C13orf8, ZNF828) is a novel regulator of kinetochore-microtubule attachment.</title>
        <authorList>
            <person name="Itoh G."/>
            <person name="Kanno S."/>
            <person name="Uchida K.S."/>
            <person name="Chiba S."/>
            <person name="Sugino S."/>
            <person name="Watanabe K."/>
            <person name="Mizuno K."/>
            <person name="Yasui A."/>
            <person name="Hirota T."/>
            <person name="Tanaka K."/>
        </authorList>
    </citation>
    <scope>INTERACTION WITH CHAMP1</scope>
    <scope>SUBCELLULAR LOCATION</scope>
</reference>
<reference key="21">
    <citation type="journal article" date="2014" name="Proc. Natl. Acad. Sci. U.S.A.">
        <title>Human Pol zeta purified with accessory subunits is active in translesion DNA synthesis and complements Pol eta in cisplatin bypass.</title>
        <authorList>
            <person name="Lee Y.S."/>
            <person name="Gregory M.T."/>
            <person name="Yang W."/>
        </authorList>
    </citation>
    <scope>IDENTIFICATION IN POL-ZETA COMPLEX</scope>
</reference>
<reference key="22">
    <citation type="journal article" date="2016" name="J. Clin. Invest.">
        <title>Biallelic inactivation of REV7 is associated with Fanconi anemia.</title>
        <authorList>
            <person name="Bluteau D."/>
            <person name="Masliah-Planchon J."/>
            <person name="Clairmont C."/>
            <person name="Rousseau A."/>
            <person name="Ceccaldi R."/>
            <person name="Dubois d'Enghien C."/>
            <person name="Bluteau O."/>
            <person name="Cuccuini W."/>
            <person name="Gachet S."/>
            <person name="Peffault de Latour R."/>
            <person name="Leblanc T."/>
            <person name="Socie G."/>
            <person name="Baruchel A."/>
            <person name="Stoppa-Lyonnet D."/>
            <person name="D'Andrea A.D."/>
            <person name="Soulier J."/>
        </authorList>
    </citation>
    <scope>INVOLVEMENT IN FANCV</scope>
    <scope>VARIANT FANCV GLU-85</scope>
    <scope>CHARACTERIZATION OF VARIANT FANCV GLU-85</scope>
</reference>
<reference key="23">
    <citation type="journal article" date="2018" name="Cell">
        <title>DNA repair network analysis reveals shieldin as a key regulator of NHEJ and PARP inhibitor sensitivity.</title>
        <authorList>
            <person name="Gupta R."/>
            <person name="Somyajit K."/>
            <person name="Narita T."/>
            <person name="Maskey E."/>
            <person name="Stanlie A."/>
            <person name="Kremer M."/>
            <person name="Typas D."/>
            <person name="Lammers M."/>
            <person name="Mailand N."/>
            <person name="Nussenzweig A."/>
            <person name="Lukas J."/>
            <person name="Choudhary C."/>
        </authorList>
    </citation>
    <scope>FUNCTION</scope>
    <scope>IDENTIFICATION IN THE SHIELDIN COMPLEX</scope>
    <scope>INTERACTION WITH SHLD2 AND SHLD3</scope>
    <scope>SUBCELLULAR LOCATION</scope>
    <scope>IDENTIFICATION BY MASS SPECTROMETRY</scope>
</reference>
<reference key="24">
    <citation type="journal article" date="2018" name="EMBO J.">
        <title>FAM35A associates with REV7 and modulates DNA damage responses of normal and BRCA1-defective cells.</title>
        <authorList>
            <person name="Tomida J."/>
            <person name="Takata K.I."/>
            <person name="Bhetawal S."/>
            <person name="Person M.D."/>
            <person name="Chao H.P."/>
            <person name="Tang D.G."/>
            <person name="Wood R.D."/>
        </authorList>
    </citation>
    <scope>INTERACTION WITH SHLD2</scope>
    <scope>IDENTIFICATION BY MASS SPECTROMETRY</scope>
</reference>
<reference key="25">
    <citation type="journal article" date="2021" name="Nat. Cell Biol.">
        <title>ASTE1 promotes shieldin-complex-mediated DNA repair by attenuating end resection.</title>
        <authorList>
            <person name="Zhao F."/>
            <person name="Kim W."/>
            <person name="Gao H."/>
            <person name="Liu C."/>
            <person name="Zhang Y."/>
            <person name="Chen Y."/>
            <person name="Deng M."/>
            <person name="Zhou Q."/>
            <person name="Huang J."/>
            <person name="Hu Q."/>
            <person name="Chen S.H."/>
            <person name="Nowsheen S."/>
            <person name="Kloeber J.A."/>
            <person name="Qin B."/>
            <person name="Yin P."/>
            <person name="Tu X."/>
            <person name="Guo G."/>
            <person name="Qin S."/>
            <person name="Zhang C."/>
            <person name="Gao M."/>
            <person name="Luo K."/>
            <person name="Liu Y."/>
            <person name="Lou Z."/>
            <person name="Yuan J."/>
        </authorList>
    </citation>
    <scope>INTERACTION WITH ASTE1</scope>
</reference>
<reference key="26">
    <citation type="journal article" date="2010" name="J. Biol. Chem.">
        <title>Crystal structure of human REV7 in complex with a human REV3 fragment and structural implication of the interaction between DNA polymerase zeta and REV1.</title>
        <authorList>
            <person name="Hara K."/>
            <person name="Hashimoto H."/>
            <person name="Murakumo Y."/>
            <person name="Kobayashi S."/>
            <person name="Kogame T."/>
            <person name="Unzai S."/>
            <person name="Akashi S."/>
            <person name="Takeda S."/>
            <person name="Shimizu T."/>
            <person name="Sato M."/>
        </authorList>
    </citation>
    <scope>X-RAY CRYSTALLOGRAPHY (1.90 ANGSTROMS) IN COMPLEX WITH REV3L</scope>
    <scope>FUNCTION</scope>
    <scope>MUTAGENESIS OF TYR-63; ARG-124; TRP-171; LEU-186; GLN-200 AND TYR-202</scope>
    <scope>INTERACTION WITH REV1</scope>
</reference>
<comment type="function">
    <text evidence="4 5 8 10 11 13 18">Adapter protein able to interact with different proteins and involved in different biological processes (PubMed:11459825, PubMed:11459826, PubMed:17296730, PubMed:17719540, PubMed:19443654, PubMed:29656893). Mediates the interaction between the error-prone DNA polymerase zeta catalytic subunit REV3L and the inserter polymerase REV1, thereby mediating the second polymerase switching in translesion DNA synthesis (PubMed:20164194). Translesion DNA synthesis releases the replication blockade of replicative polymerases, stalled in presence of DNA lesions (PubMed:20164194). Component of the shieldin complex, which plays an important role in repair of DNA double-stranded breaks (DSBs) (PubMed:29656893). During G1 and S phase of the cell cycle, the complex functions downstream of TP53BP1 to promote non-homologous end joining (NHEJ) and suppress DNA end resection (PubMed:29656893). Mediates various NHEJ-dependent processes including immunoglobulin class-switch recombination, and fusion of unprotected telomeres (PubMed:29656893). May also regulate another aspect of cellular response to DNA damage through regulation of the JNK-mediated phosphorylation and activation of the transcriptional activator ELK1 (PubMed:17296730). Inhibits the FZR1- and probably CDC20-mediated activation of the anaphase promoting complex APC thereby regulating progression through the cell cycle (PubMed:11459825, PubMed:17719540). Regulates TCF7L2-mediated gene transcription and may play a role in epithelial-mesenchymal transdifferentiation (PubMed:19443654).</text>
</comment>
<comment type="subunit">
    <text evidence="2 3 4 5 6 7 8 9 10 11 12 13 14 15 16 18 19 20 21">Homooligomer (Probable). Heterodimer with REV3L (PubMed:10660610, PubMed:11485998). This dimer forms the minimal DNA polymerase zeta complex (Pol-zeta2), with REV3L bearing DNA polymerase catalytic activity, although its activity is very low in this context (PubMed:11485998). Component of the tetrameric Pol-zeta complex (Pol-zeta4), which consists of REV3L, MAD2L2, POLD2 and POLD3; Pol-zeta4 is the fully active form of DNA polymerase zeta (PubMed:24449906). Component of the shieldin complex, consisting of SHLD1, SHLD2, SHLD3 and MAD2L2/REV7 (PubMed:29656893, PubMed:29789392). Within the complex, SHLD2 forms a scaffold which interacts with a SHLD3-MAD2L2 subcomplex via its N-terminus, and with SHLD1 via its C-terminus (PubMed:29656893). Interacts with REV1 (PubMed:11485998, PubMed:20164194). Interacts with ADAM9 (PubMed:10527948). Interacts with CHAMP1 (PubMed:21063390). Interacts with FZR1 (in complex with the anaphase promoting complex APC) (PubMed:11459825, PubMed:11459826). Interacts with CDC20; PubMed:11459825 could not detect the interaction (PubMed:11459826). Interacts with RAN (PubMed:19753112). Interacts with ELK1; the interaction is direct and recruits MAD2L2 to ELK1-specific promoters (PubMed:17296730). May interact with the JNK kinases MAPK8 and/or MAPK9 to stimulate ELK1 phosphorylation and transcriptional activity upon DNA damage (PubMed:17296730). Interacts with TCF7L2; prevents its binding to promoters and negatively modulates its transcriptional activity (PubMed:19443654). Interacts with YY1AP1 (PubMed:17541814). Interacts with S.flexneri protein ipaB; prevents the interaction of MAD2L2 with FZR1 and CDC20 resulting in an activation of the anaphase-promoting complex APC and a cell cycle arrest (PubMed:17719540). Interacts with PRCC; the interaction is direct (PubMed:11717438). Interacts with POGZ (PubMed:20850016). Interacts with ASTE1 (PubMed:34354233).</text>
</comment>
<comment type="interaction">
    <interactant intactId="EBI-77889">
        <id>Q9UI95</id>
    </interactant>
    <interactant intactId="EBI-77903">
        <id>Q13443</id>
        <label>ADAM9</label>
    </interactant>
    <organismsDiffer>false</organismsDiffer>
    <experiments>3</experiments>
</comment>
<comment type="interaction">
    <interactant intactId="EBI-77889">
        <id>Q9UI95</id>
    </interactant>
    <interactant intactId="EBI-1058722">
        <id>Q13554</id>
        <label>CAMK2B</label>
    </interactant>
    <organismsDiffer>false</organismsDiffer>
    <experiments>3</experiments>
</comment>
<comment type="interaction">
    <interactant intactId="EBI-77889">
        <id>Q9UI95</id>
    </interactant>
    <interactant intactId="EBI-367462">
        <id>Q12834</id>
        <label>CDC20</label>
    </interactant>
    <organismsDiffer>false</organismsDiffer>
    <experiments>2</experiments>
</comment>
<comment type="interaction">
    <interactant intactId="EBI-77889">
        <id>Q9UI95</id>
    </interactant>
    <interactant intactId="EBI-994813">
        <id>P30260</id>
        <label>CDC27</label>
    </interactant>
    <organismsDiffer>false</organismsDiffer>
    <experiments>2</experiments>
</comment>
<comment type="interaction">
    <interactant intactId="EBI-77889">
        <id>Q9UI95</id>
    </interactant>
    <interactant intactId="EBI-2560420">
        <id>Q96JM3</id>
        <label>CHAMP1</label>
    </interactant>
    <organismsDiffer>false</organismsDiffer>
    <experiments>6</experiments>
</comment>
<comment type="interaction">
    <interactant intactId="EBI-77889">
        <id>Q9UI95</id>
    </interactant>
    <interactant intactId="EBI-12155483">
        <id>Q9H1P6</id>
        <label>CIMIP1</label>
    </interactant>
    <organismsDiffer>false</organismsDiffer>
    <experiments>3</experiments>
</comment>
<comment type="interaction">
    <interactant intactId="EBI-77889">
        <id>Q9UI95</id>
    </interactant>
    <interactant intactId="EBI-12366971">
        <id>O75140-2</id>
        <label>DEPDC5</label>
    </interactant>
    <organismsDiffer>false</organismsDiffer>
    <experiments>3</experiments>
</comment>
<comment type="interaction">
    <interactant intactId="EBI-77889">
        <id>Q9UI95</id>
    </interactant>
    <interactant intactId="EBI-10968534">
        <id>P50570-2</id>
        <label>DNM2</label>
    </interactant>
    <organismsDiffer>false</organismsDiffer>
    <experiments>3</experiments>
</comment>
<comment type="interaction">
    <interactant intactId="EBI-77889">
        <id>Q9UI95</id>
    </interactant>
    <interactant intactId="EBI-19153639">
        <id>Q9NTX9</id>
        <label>FAM217B</label>
    </interactant>
    <organismsDiffer>false</organismsDiffer>
    <experiments>3</experiments>
</comment>
<comment type="interaction">
    <interactant intactId="EBI-77889">
        <id>Q9UI95</id>
    </interactant>
    <interactant intactId="EBI-18138793">
        <id>Q9C0B1-2</id>
        <label>FTO</label>
    </interactant>
    <organismsDiffer>false</organismsDiffer>
    <experiments>3</experiments>
</comment>
<comment type="interaction">
    <interactant intactId="EBI-77889">
        <id>Q9UI95</id>
    </interactant>
    <interactant intactId="EBI-724997">
        <id>Q9UM11</id>
        <label>FZR1</label>
    </interactant>
    <organismsDiffer>false</organismsDiffer>
    <experiments>2</experiments>
</comment>
<comment type="interaction">
    <interactant intactId="EBI-77889">
        <id>Q9UI95</id>
    </interactant>
    <interactant intactId="EBI-19954058">
        <id>O15499</id>
        <label>GSC2</label>
    </interactant>
    <organismsDiffer>false</organismsDiffer>
    <experiments>3</experiments>
</comment>
<comment type="interaction">
    <interactant intactId="EBI-77889">
        <id>Q9UI95</id>
    </interactant>
    <interactant intactId="EBI-745305">
        <id>Q13422</id>
        <label>IKZF1</label>
    </interactant>
    <organismsDiffer>false</organismsDiffer>
    <experiments>3</experiments>
</comment>
<comment type="interaction">
    <interactant intactId="EBI-77889">
        <id>Q9UI95</id>
    </interactant>
    <interactant intactId="EBI-747204">
        <id>Q9UKT9</id>
        <label>IKZF3</label>
    </interactant>
    <organismsDiffer>false</organismsDiffer>
    <experiments>3</experiments>
</comment>
<comment type="interaction">
    <interactant intactId="EBI-77889">
        <id>Q9UI95</id>
    </interactant>
    <interactant intactId="EBI-6509505">
        <id>Q0VD86</id>
        <label>INCA1</label>
    </interactant>
    <organismsDiffer>false</organismsDiffer>
    <experiments>3</experiments>
</comment>
<comment type="interaction">
    <interactant intactId="EBI-77889">
        <id>Q9UI95</id>
    </interactant>
    <interactant intactId="EBI-4397613">
        <id>Q7L273</id>
        <label>KCTD9</label>
    </interactant>
    <organismsDiffer>false</organismsDiffer>
    <experiments>3</experiments>
</comment>
<comment type="interaction">
    <interactant intactId="EBI-77889">
        <id>Q9UI95</id>
    </interactant>
    <interactant intactId="EBI-1047093">
        <id>O76011</id>
        <label>KRT34</label>
    </interactant>
    <organismsDiffer>false</organismsDiffer>
    <experiments>3</experiments>
</comment>
<comment type="interaction">
    <interactant intactId="EBI-77889">
        <id>Q9UI95</id>
    </interactant>
    <interactant intactId="EBI-12516603">
        <id>Q8WWY6</id>
        <label>MBD3L1</label>
    </interactant>
    <organismsDiffer>false</organismsDiffer>
    <experiments>3</experiments>
</comment>
<comment type="interaction">
    <interactant intactId="EBI-77889">
        <id>Q9UI95</id>
    </interactant>
    <interactant intactId="EBI-2876622">
        <id>Q9UPG8</id>
        <label>PLAGL2</label>
    </interactant>
    <organismsDiffer>false</organismsDiffer>
    <experiments>3</experiments>
</comment>
<comment type="interaction">
    <interactant intactId="EBI-77889">
        <id>Q9UI95</id>
    </interactant>
    <interactant intactId="EBI-17715099">
        <id>O75688-3</id>
        <label>PPM1B</label>
    </interactant>
    <organismsDiffer>false</organismsDiffer>
    <experiments>3</experiments>
</comment>
<comment type="interaction">
    <interactant intactId="EBI-77889">
        <id>Q9UI95</id>
    </interactant>
    <interactant intactId="EBI-1567866">
        <id>Q6MZQ0</id>
        <label>PRR5L</label>
    </interactant>
    <organismsDiffer>false</organismsDiffer>
    <experiments>3</experiments>
</comment>
<comment type="interaction">
    <interactant intactId="EBI-77889">
        <id>Q9UI95</id>
    </interactant>
    <interactant intactId="EBI-949727">
        <id>Q86YS3</id>
        <label>RAB11FIP4</label>
    </interactant>
    <organismsDiffer>false</organismsDiffer>
    <experiments>3</experiments>
</comment>
<comment type="interaction">
    <interactant intactId="EBI-77889">
        <id>Q9UI95</id>
    </interactant>
    <interactant intactId="EBI-307352">
        <id>Q04864</id>
        <label>REL</label>
    </interactant>
    <organismsDiffer>false</organismsDiffer>
    <experiments>3</experiments>
</comment>
<comment type="interaction">
    <interactant intactId="EBI-77889">
        <id>Q9UI95</id>
    </interactant>
    <interactant intactId="EBI-10829018">
        <id>Q04864-2</id>
        <label>REL</label>
    </interactant>
    <organismsDiffer>false</organismsDiffer>
    <experiments>3</experiments>
</comment>
<comment type="interaction">
    <interactant intactId="EBI-77889">
        <id>Q9UI95</id>
    </interactant>
    <interactant intactId="EBI-2871302">
        <id>O60673</id>
        <label>REV3L</label>
    </interactant>
    <organismsDiffer>false</organismsDiffer>
    <experiments>5</experiments>
</comment>
<comment type="interaction">
    <interactant intactId="EBI-77889">
        <id>Q9UI95</id>
    </interactant>
    <interactant intactId="EBI-10321817">
        <id>A8K8P3-4</id>
        <label>SFI1</label>
    </interactant>
    <organismsDiffer>false</organismsDiffer>
    <experiments>3</experiments>
</comment>
<comment type="interaction">
    <interactant intactId="EBI-77889">
        <id>Q9UI95</id>
    </interactant>
    <interactant intactId="EBI-20209073">
        <id>Q6ZNX1</id>
        <label>SHLD3</label>
    </interactant>
    <organismsDiffer>false</organismsDiffer>
    <experiments>7</experiments>
</comment>
<comment type="interaction">
    <interactant intactId="EBI-77889">
        <id>Q9UI95</id>
    </interactant>
    <interactant intactId="EBI-533224">
        <id>P15884</id>
        <label>TCF4</label>
    </interactant>
    <organismsDiffer>false</organismsDiffer>
    <experiments>3</experiments>
</comment>
<comment type="interaction">
    <interactant intactId="EBI-77889">
        <id>Q9UI95</id>
    </interactant>
    <interactant intactId="EBI-13636688">
        <id>P15884-3</id>
        <label>TCF4</label>
    </interactant>
    <organismsDiffer>false</organismsDiffer>
    <experiments>3</experiments>
</comment>
<comment type="interaction">
    <interactant intactId="EBI-77889">
        <id>Q9UI95</id>
    </interactant>
    <interactant intactId="EBI-3925505">
        <id>Q8TBB0</id>
        <label>THAP6</label>
    </interactant>
    <organismsDiffer>false</organismsDiffer>
    <experiments>3</experiments>
</comment>
<comment type="interaction">
    <interactant intactId="EBI-77889">
        <id>Q9UI95</id>
    </interactant>
    <interactant intactId="EBI-719493">
        <id>P14373</id>
        <label>TRIM27</label>
    </interactant>
    <organismsDiffer>false</organismsDiffer>
    <experiments>3</experiments>
</comment>
<comment type="interaction">
    <interactant intactId="EBI-77889">
        <id>Q9UI95</id>
    </interactant>
    <interactant intactId="EBI-2130429">
        <id>Q9BYV2</id>
        <label>TRIM54</label>
    </interactant>
    <organismsDiffer>false</organismsDiffer>
    <experiments>3</experiments>
</comment>
<comment type="interaction">
    <interactant intactId="EBI-77889">
        <id>Q9UI95</id>
    </interactant>
    <interactant intactId="EBI-2813981">
        <id>Q9C029</id>
        <label>TRIM7</label>
    </interactant>
    <organismsDiffer>false</organismsDiffer>
    <experiments>3</experiments>
</comment>
<comment type="interaction">
    <interactant intactId="EBI-77889">
        <id>Q9UI95</id>
    </interactant>
    <interactant intactId="EBI-740037">
        <id>O96006</id>
        <label>ZBED1</label>
    </interactant>
    <organismsDiffer>false</organismsDiffer>
    <experiments>3</experiments>
</comment>
<comment type="interaction">
    <interactant intactId="EBI-77889">
        <id>Q9UI95</id>
    </interactant>
    <interactant intactId="EBI-12030590">
        <id>Q9H0C1</id>
        <label>ZMYND12</label>
    </interactant>
    <organismsDiffer>false</organismsDiffer>
    <experiments>3</experiments>
</comment>
<comment type="interaction">
    <interactant intactId="EBI-77889">
        <id>Q9UI95</id>
    </interactant>
    <interactant intactId="EBI-10269136">
        <id>Q8NB15</id>
        <label>ZNF511</label>
    </interactant>
    <organismsDiffer>false</organismsDiffer>
    <experiments>3</experiments>
</comment>
<comment type="interaction">
    <interactant intactId="EBI-77889">
        <id>Q9UI95</id>
    </interactant>
    <interactant intactId="EBI-373363">
        <id>Q96NG5</id>
        <label>ZNF558</label>
    </interactant>
    <organismsDiffer>false</organismsDiffer>
    <experiments>3</experiments>
</comment>
<comment type="interaction">
    <interactant intactId="EBI-77889">
        <id>Q9UI95</id>
    </interactant>
    <interactant intactId="EBI-625509">
        <id>Q8N720</id>
        <label>ZNF655</label>
    </interactant>
    <organismsDiffer>false</organismsDiffer>
    <experiments>3</experiments>
</comment>
<comment type="interaction">
    <interactant intactId="EBI-77889">
        <id>Q9UI95</id>
    </interactant>
    <interactant intactId="EBI-490239">
        <id>P18011</id>
        <label>sctE</label>
    </interactant>
    <organismsDiffer>true</organismsDiffer>
    <experiments>7</experiments>
</comment>
<comment type="subcellular location">
    <subcellularLocation>
        <location evidence="7 9 10 12">Nucleus</location>
    </subcellularLocation>
    <subcellularLocation>
        <location evidence="12 15">Cytoplasm</location>
        <location evidence="12 15">Cytoskeleton</location>
        <location evidence="12 15">Spindle</location>
    </subcellularLocation>
    <subcellularLocation>
        <location evidence="7 10">Cytoplasm</location>
    </subcellularLocation>
    <subcellularLocation>
        <location evidence="18">Chromosome</location>
    </subcellularLocation>
    <text evidence="18">Recruited to sites of chromosomal double-stranded breaks during G1 and S phase of the cell cycle.</text>
</comment>
<comment type="tissue specificity">
    <text evidence="7">Ubiquitously expressed.</text>
</comment>
<comment type="disease" evidence="17">
    <disease id="DI-04907">
        <name>Fanconi anemia, complementation group V</name>
        <acronym>FANCV</acronym>
        <description>A disorder affecting all bone marrow elements and resulting in anemia, leukopenia and thrombopenia. It is associated with cardiac, renal and limb malformations, dermal pigmentary changes, and a predisposition to the development of malignancies. At the cellular level it is associated with hypersensitivity to DNA-damaging agents, chromosomal instability (increased chromosome breakage) and defective DNA repair.</description>
        <dbReference type="MIM" id="617243"/>
    </disease>
    <text>The disease is caused by variants affecting the gene represented in this entry.</text>
</comment>
<organism>
    <name type="scientific">Homo sapiens</name>
    <name type="common">Human</name>
    <dbReference type="NCBI Taxonomy" id="9606"/>
    <lineage>
        <taxon>Eukaryota</taxon>
        <taxon>Metazoa</taxon>
        <taxon>Chordata</taxon>
        <taxon>Craniata</taxon>
        <taxon>Vertebrata</taxon>
        <taxon>Euteleostomi</taxon>
        <taxon>Mammalia</taxon>
        <taxon>Eutheria</taxon>
        <taxon>Euarchontoglires</taxon>
        <taxon>Primates</taxon>
        <taxon>Haplorrhini</taxon>
        <taxon>Catarrhini</taxon>
        <taxon>Hominidae</taxon>
        <taxon>Homo</taxon>
    </lineage>
</organism>
<keyword id="KW-0002">3D-structure</keyword>
<keyword id="KW-0131">Cell cycle</keyword>
<keyword id="KW-0132">Cell division</keyword>
<keyword id="KW-0158">Chromosome</keyword>
<keyword id="KW-0963">Cytoplasm</keyword>
<keyword id="KW-0206">Cytoskeleton</keyword>
<keyword id="KW-0225">Disease variant</keyword>
<keyword id="KW-0227">DNA damage</keyword>
<keyword id="KW-0234">DNA repair</keyword>
<keyword id="KW-0923">Fanconi anemia</keyword>
<keyword id="KW-0498">Mitosis</keyword>
<keyword id="KW-0539">Nucleus</keyword>
<keyword id="KW-1267">Proteomics identification</keyword>
<keyword id="KW-1185">Reference proteome</keyword>
<keyword id="KW-0804">Transcription</keyword>
<keyword id="KW-0805">Transcription regulation</keyword>
<name>MD2L2_HUMAN</name>
<dbReference type="EMBL" id="AF072933">
    <property type="protein sequence ID" value="AAD41647.1"/>
    <property type="molecule type" value="mRNA"/>
</dbReference>
<dbReference type="EMBL" id="AF080398">
    <property type="protein sequence ID" value="AAF20267.1"/>
    <property type="molecule type" value="mRNA"/>
</dbReference>
<dbReference type="EMBL" id="AF139365">
    <property type="protein sequence ID" value="AAD30290.1"/>
    <property type="molecule type" value="mRNA"/>
</dbReference>
<dbReference type="EMBL" id="AF157482">
    <property type="protein sequence ID" value="AAF34357.1"/>
    <property type="molecule type" value="mRNA"/>
</dbReference>
<dbReference type="EMBL" id="AK027327">
    <property type="protein sequence ID" value="BAG51305.1"/>
    <property type="molecule type" value="mRNA"/>
</dbReference>
<dbReference type="EMBL" id="AK094316">
    <property type="protein sequence ID" value="BAG52858.1"/>
    <property type="molecule type" value="mRNA"/>
</dbReference>
<dbReference type="EMBL" id="DQ017900">
    <property type="protein sequence ID" value="AAY26393.1"/>
    <property type="molecule type" value="Genomic_DNA"/>
</dbReference>
<dbReference type="EMBL" id="AL031731">
    <property type="status" value="NOT_ANNOTATED_CDS"/>
    <property type="molecule type" value="Genomic_DNA"/>
</dbReference>
<dbReference type="EMBL" id="CH471130">
    <property type="protein sequence ID" value="EAW71697.1"/>
    <property type="molecule type" value="Genomic_DNA"/>
</dbReference>
<dbReference type="EMBL" id="BC015244">
    <property type="protein sequence ID" value="AAH15244.1"/>
    <property type="molecule type" value="mRNA"/>
</dbReference>
<dbReference type="CCDS" id="CCDS134.1"/>
<dbReference type="RefSeq" id="NP_001120797.1">
    <property type="nucleotide sequence ID" value="NM_001127325.2"/>
</dbReference>
<dbReference type="RefSeq" id="NP_006332.3">
    <property type="nucleotide sequence ID" value="NM_006341.3"/>
</dbReference>
<dbReference type="RefSeq" id="XP_011538809.1">
    <property type="nucleotide sequence ID" value="XM_011540507.1"/>
</dbReference>
<dbReference type="RefSeq" id="XP_047286738.1">
    <property type="nucleotide sequence ID" value="XM_047430782.1"/>
</dbReference>
<dbReference type="RefSeq" id="XP_054189822.1">
    <property type="nucleotide sequence ID" value="XM_054333847.1"/>
</dbReference>
<dbReference type="PDB" id="3ABD">
    <property type="method" value="X-ray"/>
    <property type="resolution" value="1.90 A"/>
    <property type="chains" value="A/B=1-211"/>
</dbReference>
<dbReference type="PDB" id="3ABE">
    <property type="method" value="X-ray"/>
    <property type="resolution" value="2.60 A"/>
    <property type="chains" value="C=1-211"/>
</dbReference>
<dbReference type="PDB" id="3VU7">
    <property type="method" value="X-ray"/>
    <property type="resolution" value="2.80 A"/>
    <property type="chains" value="C=1-211"/>
</dbReference>
<dbReference type="PDB" id="4EXT">
    <property type="method" value="X-ray"/>
    <property type="resolution" value="1.90 A"/>
    <property type="chains" value="C=7-209"/>
</dbReference>
<dbReference type="PDB" id="4GK0">
    <property type="method" value="X-ray"/>
    <property type="resolution" value="2.70 A"/>
    <property type="chains" value="A/B=1-211"/>
</dbReference>
<dbReference type="PDB" id="4GK5">
    <property type="method" value="X-ray"/>
    <property type="resolution" value="3.21 A"/>
    <property type="chains" value="A/B=1-211"/>
</dbReference>
<dbReference type="PDB" id="5XPT">
    <property type="method" value="X-ray"/>
    <property type="resolution" value="2.10 A"/>
    <property type="chains" value="A=1-211"/>
</dbReference>
<dbReference type="PDB" id="5XPU">
    <property type="method" value="X-ray"/>
    <property type="resolution" value="2.30 A"/>
    <property type="chains" value="A=1-211"/>
</dbReference>
<dbReference type="PDB" id="6BC8">
    <property type="method" value="X-ray"/>
    <property type="resolution" value="1.68 A"/>
    <property type="chains" value="A=1-211"/>
</dbReference>
<dbReference type="PDB" id="6BCD">
    <property type="method" value="X-ray"/>
    <property type="resolution" value="1.43 A"/>
    <property type="chains" value="A=1-211"/>
</dbReference>
<dbReference type="PDB" id="6BI7">
    <property type="method" value="X-ray"/>
    <property type="resolution" value="2.80 A"/>
    <property type="chains" value="A/C/E/G=1-211"/>
</dbReference>
<dbReference type="PDB" id="6K07">
    <property type="method" value="X-ray"/>
    <property type="resolution" value="2.24 A"/>
    <property type="chains" value="A=7-211"/>
</dbReference>
<dbReference type="PDB" id="6K08">
    <property type="method" value="X-ray"/>
    <property type="resolution" value="2.31 A"/>
    <property type="chains" value="A=7-211"/>
</dbReference>
<dbReference type="PDB" id="6KEA">
    <property type="method" value="X-ray"/>
    <property type="resolution" value="2.35 A"/>
    <property type="chains" value="A/B/C/D=12-211"/>
</dbReference>
<dbReference type="PDB" id="6KTO">
    <property type="method" value="X-ray"/>
    <property type="resolution" value="3.45 A"/>
    <property type="chains" value="A/B=1-211"/>
</dbReference>
<dbReference type="PDB" id="6M7A">
    <property type="method" value="X-ray"/>
    <property type="resolution" value="1.90 A"/>
    <property type="chains" value="A/B=1-208"/>
</dbReference>
<dbReference type="PDB" id="6M7B">
    <property type="method" value="X-ray"/>
    <property type="resolution" value="1.77 A"/>
    <property type="chains" value="A/B=1-211"/>
</dbReference>
<dbReference type="PDB" id="6NIF">
    <property type="method" value="X-ray"/>
    <property type="resolution" value="2.00 A"/>
    <property type="chains" value="A=2-211"/>
</dbReference>
<dbReference type="PDB" id="6VE5">
    <property type="method" value="X-ray"/>
    <property type="resolution" value="2.00 A"/>
    <property type="chains" value="A=1-211"/>
</dbReference>
<dbReference type="PDB" id="6WS0">
    <property type="method" value="X-ray"/>
    <property type="resolution" value="2.24 A"/>
    <property type="chains" value="CCC=1-211"/>
</dbReference>
<dbReference type="PDB" id="6WS5">
    <property type="method" value="X-ray"/>
    <property type="resolution" value="2.47 A"/>
    <property type="chains" value="CCC=1-211"/>
</dbReference>
<dbReference type="PDB" id="6WW9">
    <property type="method" value="X-ray"/>
    <property type="resolution" value="2.70 A"/>
    <property type="chains" value="A/B=2-211"/>
</dbReference>
<dbReference type="PDB" id="6WWA">
    <property type="method" value="X-ray"/>
    <property type="resolution" value="3.80 A"/>
    <property type="chains" value="A/B/C/D=2-211"/>
</dbReference>
<dbReference type="PDB" id="7L9P">
    <property type="method" value="EM"/>
    <property type="resolution" value="3.60 A"/>
    <property type="chains" value="G/I/J/K=2-211"/>
</dbReference>
<dbReference type="PDBsum" id="3ABD"/>
<dbReference type="PDBsum" id="3ABE"/>
<dbReference type="PDBsum" id="3VU7"/>
<dbReference type="PDBsum" id="4EXT"/>
<dbReference type="PDBsum" id="4GK0"/>
<dbReference type="PDBsum" id="4GK5"/>
<dbReference type="PDBsum" id="5XPT"/>
<dbReference type="PDBsum" id="5XPU"/>
<dbReference type="PDBsum" id="6BC8"/>
<dbReference type="PDBsum" id="6BCD"/>
<dbReference type="PDBsum" id="6BI7"/>
<dbReference type="PDBsum" id="6K07"/>
<dbReference type="PDBsum" id="6K08"/>
<dbReference type="PDBsum" id="6KEA"/>
<dbReference type="PDBsum" id="6KTO"/>
<dbReference type="PDBsum" id="6M7A"/>
<dbReference type="PDBsum" id="6M7B"/>
<dbReference type="PDBsum" id="6NIF"/>
<dbReference type="PDBsum" id="6VE5"/>
<dbReference type="PDBsum" id="6WS0"/>
<dbReference type="PDBsum" id="6WS5"/>
<dbReference type="PDBsum" id="6WW9"/>
<dbReference type="PDBsum" id="6WWA"/>
<dbReference type="PDBsum" id="7L9P"/>
<dbReference type="EMDB" id="EMD-23244"/>
<dbReference type="SASBDB" id="Q9UI95"/>
<dbReference type="SMR" id="Q9UI95"/>
<dbReference type="BioGRID" id="115722">
    <property type="interactions" value="334"/>
</dbReference>
<dbReference type="ComplexPortal" id="CPX-3481">
    <property type="entry name" value="Shieldin complex"/>
</dbReference>
<dbReference type="ComplexPortal" id="CPX-994">
    <property type="entry name" value="DNA polymerase zeta complex"/>
</dbReference>
<dbReference type="CORUM" id="Q9UI95"/>
<dbReference type="FunCoup" id="Q9UI95">
    <property type="interactions" value="1335"/>
</dbReference>
<dbReference type="IntAct" id="Q9UI95">
    <property type="interactions" value="178"/>
</dbReference>
<dbReference type="MINT" id="Q9UI95"/>
<dbReference type="STRING" id="9606.ENSP00000235310"/>
<dbReference type="ChEMBL" id="CHEMBL4524021"/>
<dbReference type="iPTMnet" id="Q9UI95"/>
<dbReference type="PhosphoSitePlus" id="Q9UI95"/>
<dbReference type="BioMuta" id="MAD2L2"/>
<dbReference type="jPOST" id="Q9UI95"/>
<dbReference type="MassIVE" id="Q9UI95"/>
<dbReference type="PaxDb" id="9606-ENSP00000235310"/>
<dbReference type="PeptideAtlas" id="Q9UI95"/>
<dbReference type="ProteomicsDB" id="84481"/>
<dbReference type="Pumba" id="Q9UI95"/>
<dbReference type="TopDownProteomics" id="Q9UI95"/>
<dbReference type="Antibodypedia" id="3766">
    <property type="antibodies" value="204 antibodies from 31 providers"/>
</dbReference>
<dbReference type="DNASU" id="10459"/>
<dbReference type="Ensembl" id="ENST00000235310.7">
    <property type="protein sequence ID" value="ENSP00000235310.2"/>
    <property type="gene ID" value="ENSG00000116670.17"/>
</dbReference>
<dbReference type="Ensembl" id="ENST00000376667.7">
    <property type="protein sequence ID" value="ENSP00000365855.3"/>
    <property type="gene ID" value="ENSG00000116670.17"/>
</dbReference>
<dbReference type="Ensembl" id="ENST00000376692.9">
    <property type="protein sequence ID" value="ENSP00000365882.4"/>
    <property type="gene ID" value="ENSG00000116670.17"/>
</dbReference>
<dbReference type="Ensembl" id="ENST00000456915.2">
    <property type="protein sequence ID" value="ENSP00000400982.2"/>
    <property type="gene ID" value="ENSG00000116670.17"/>
</dbReference>
<dbReference type="Ensembl" id="ENST00000717649.1">
    <property type="protein sequence ID" value="ENSP00000520633.1"/>
    <property type="gene ID" value="ENSG00000116670.17"/>
</dbReference>
<dbReference type="GeneID" id="10459"/>
<dbReference type="KEGG" id="hsa:10459"/>
<dbReference type="MANE-Select" id="ENST00000376692.9">
    <property type="protein sequence ID" value="ENSP00000365882.4"/>
    <property type="RefSeq nucleotide sequence ID" value="NM_006341.4"/>
    <property type="RefSeq protein sequence ID" value="NP_006332.3"/>
</dbReference>
<dbReference type="UCSC" id="uc001asp.4">
    <property type="organism name" value="human"/>
</dbReference>
<dbReference type="AGR" id="HGNC:6764"/>
<dbReference type="CTD" id="10459"/>
<dbReference type="DisGeNET" id="10459"/>
<dbReference type="GeneCards" id="MAD2L2"/>
<dbReference type="GeneReviews" id="MAD2L2"/>
<dbReference type="HGNC" id="HGNC:6764">
    <property type="gene designation" value="MAD2L2"/>
</dbReference>
<dbReference type="HPA" id="ENSG00000116670">
    <property type="expression patterns" value="Low tissue specificity"/>
</dbReference>
<dbReference type="MalaCards" id="MAD2L2"/>
<dbReference type="MIM" id="604094">
    <property type="type" value="gene"/>
</dbReference>
<dbReference type="MIM" id="617243">
    <property type="type" value="phenotype"/>
</dbReference>
<dbReference type="neXtProt" id="NX_Q9UI95"/>
<dbReference type="OpenTargets" id="ENSG00000116670"/>
<dbReference type="Orphanet" id="84">
    <property type="disease" value="Fanconi anemia"/>
</dbReference>
<dbReference type="PharmGKB" id="PA398"/>
<dbReference type="VEuPathDB" id="HostDB:ENSG00000116670"/>
<dbReference type="eggNOG" id="KOG3186">
    <property type="taxonomic scope" value="Eukaryota"/>
</dbReference>
<dbReference type="GeneTree" id="ENSGT00940000153395"/>
<dbReference type="InParanoid" id="Q9UI95"/>
<dbReference type="OMA" id="CEDFPWI"/>
<dbReference type="OrthoDB" id="21254at2759"/>
<dbReference type="PAN-GO" id="Q9UI95">
    <property type="GO annotations" value="1 GO annotation based on evolutionary models"/>
</dbReference>
<dbReference type="PhylomeDB" id="Q9UI95"/>
<dbReference type="TreeFam" id="TF101085"/>
<dbReference type="PathwayCommons" id="Q9UI95"/>
<dbReference type="Reactome" id="R-HSA-110312">
    <property type="pathway name" value="Translesion synthesis by REV1"/>
</dbReference>
<dbReference type="Reactome" id="R-HSA-5655862">
    <property type="pathway name" value="Translesion synthesis by POLK"/>
</dbReference>
<dbReference type="Reactome" id="R-HSA-5656121">
    <property type="pathway name" value="Translesion synthesis by POLI"/>
</dbReference>
<dbReference type="SignaLink" id="Q9UI95"/>
<dbReference type="SIGNOR" id="Q9UI95"/>
<dbReference type="BioGRID-ORCS" id="10459">
    <property type="hits" value="716 hits in 1167 CRISPR screens"/>
</dbReference>
<dbReference type="CD-CODE" id="8C2F96ED">
    <property type="entry name" value="Centrosome"/>
</dbReference>
<dbReference type="ChiTaRS" id="MAD2L2">
    <property type="organism name" value="human"/>
</dbReference>
<dbReference type="EvolutionaryTrace" id="Q9UI95"/>
<dbReference type="GeneWiki" id="MAD2L2"/>
<dbReference type="GenomeRNAi" id="10459"/>
<dbReference type="Pharos" id="Q9UI95">
    <property type="development level" value="Tbio"/>
</dbReference>
<dbReference type="PRO" id="PR:Q9UI95"/>
<dbReference type="Proteomes" id="UP000005640">
    <property type="component" value="Chromosome 1"/>
</dbReference>
<dbReference type="RNAct" id="Q9UI95">
    <property type="molecule type" value="protein"/>
</dbReference>
<dbReference type="Bgee" id="ENSG00000116670">
    <property type="expression patterns" value="Expressed in ganglionic eminence and 164 other cell types or tissues"/>
</dbReference>
<dbReference type="ExpressionAtlas" id="Q9UI95">
    <property type="expression patterns" value="baseline and differential"/>
</dbReference>
<dbReference type="GO" id="GO:0000785">
    <property type="term" value="C:chromatin"/>
    <property type="evidence" value="ECO:0000303"/>
    <property type="project" value="ComplexPortal"/>
</dbReference>
<dbReference type="GO" id="GO:0005694">
    <property type="term" value="C:chromosome"/>
    <property type="evidence" value="ECO:0000305"/>
    <property type="project" value="UniProtKB"/>
</dbReference>
<dbReference type="GO" id="GO:0005737">
    <property type="term" value="C:cytoplasm"/>
    <property type="evidence" value="ECO:0007669"/>
    <property type="project" value="UniProtKB-SubCell"/>
</dbReference>
<dbReference type="GO" id="GO:0005654">
    <property type="term" value="C:nucleoplasm"/>
    <property type="evidence" value="ECO:0000314"/>
    <property type="project" value="HPA"/>
</dbReference>
<dbReference type="GO" id="GO:0005634">
    <property type="term" value="C:nucleus"/>
    <property type="evidence" value="ECO:0000314"/>
    <property type="project" value="UniProtKB"/>
</dbReference>
<dbReference type="GO" id="GO:0035861">
    <property type="term" value="C:site of double-strand break"/>
    <property type="evidence" value="ECO:0000303"/>
    <property type="project" value="ComplexPortal"/>
</dbReference>
<dbReference type="GO" id="GO:0005819">
    <property type="term" value="C:spindle"/>
    <property type="evidence" value="ECO:0000314"/>
    <property type="project" value="UniProtKB"/>
</dbReference>
<dbReference type="GO" id="GO:0016035">
    <property type="term" value="C:zeta DNA polymerase complex"/>
    <property type="evidence" value="ECO:0000314"/>
    <property type="project" value="UniProtKB"/>
</dbReference>
<dbReference type="GO" id="GO:0008432">
    <property type="term" value="F:JUN kinase binding"/>
    <property type="evidence" value="ECO:0000314"/>
    <property type="project" value="UniProtKB"/>
</dbReference>
<dbReference type="GO" id="GO:0061629">
    <property type="term" value="F:RNA polymerase II-specific DNA-binding transcription factor binding"/>
    <property type="evidence" value="ECO:0000353"/>
    <property type="project" value="BHF-UCL"/>
</dbReference>
<dbReference type="GO" id="GO:0003714">
    <property type="term" value="F:transcription corepressor activity"/>
    <property type="evidence" value="ECO:0000315"/>
    <property type="project" value="BHF-UCL"/>
</dbReference>
<dbReference type="GO" id="GO:0007015">
    <property type="term" value="P:actin filament organization"/>
    <property type="evidence" value="ECO:0000315"/>
    <property type="project" value="BHF-UCL"/>
</dbReference>
<dbReference type="GO" id="GO:0051301">
    <property type="term" value="P:cell division"/>
    <property type="evidence" value="ECO:0007669"/>
    <property type="project" value="UniProtKB-KW"/>
</dbReference>
<dbReference type="GO" id="GO:0042772">
    <property type="term" value="P:DNA damage response, signal transduction resulting in transcription"/>
    <property type="evidence" value="ECO:0000314"/>
    <property type="project" value="UniProtKB"/>
</dbReference>
<dbReference type="GO" id="GO:0006302">
    <property type="term" value="P:double-strand break repair"/>
    <property type="evidence" value="ECO:0000316"/>
    <property type="project" value="UniProtKB"/>
</dbReference>
<dbReference type="GO" id="GO:0042276">
    <property type="term" value="P:error-prone translesion synthesis"/>
    <property type="evidence" value="ECO:0000314"/>
    <property type="project" value="ComplexPortal"/>
</dbReference>
<dbReference type="GO" id="GO:0007094">
    <property type="term" value="P:mitotic spindle assembly checkpoint signaling"/>
    <property type="evidence" value="ECO:0000304"/>
    <property type="project" value="ProtInc"/>
</dbReference>
<dbReference type="GO" id="GO:0090090">
    <property type="term" value="P:negative regulation of canonical Wnt signaling pathway"/>
    <property type="evidence" value="ECO:0000315"/>
    <property type="project" value="BHF-UCL"/>
</dbReference>
<dbReference type="GO" id="GO:2000048">
    <property type="term" value="P:negative regulation of cell-cell adhesion mediated by cadherin"/>
    <property type="evidence" value="ECO:0000315"/>
    <property type="project" value="BHF-UCL"/>
</dbReference>
<dbReference type="GO" id="GO:2000042">
    <property type="term" value="P:negative regulation of double-strand break repair via homologous recombination"/>
    <property type="evidence" value="ECO:0000314"/>
    <property type="project" value="UniProtKB"/>
</dbReference>
<dbReference type="GO" id="GO:0010719">
    <property type="term" value="P:negative regulation of epithelial to mesenchymal transition"/>
    <property type="evidence" value="ECO:0000315"/>
    <property type="project" value="BHF-UCL"/>
</dbReference>
<dbReference type="GO" id="GO:0042177">
    <property type="term" value="P:negative regulation of protein catabolic process"/>
    <property type="evidence" value="ECO:0000314"/>
    <property type="project" value="UniProtKB"/>
</dbReference>
<dbReference type="GO" id="GO:0010944">
    <property type="term" value="P:negative regulation of transcription by competitive promoter binding"/>
    <property type="evidence" value="ECO:0000315"/>
    <property type="project" value="BHF-UCL"/>
</dbReference>
<dbReference type="GO" id="GO:0000122">
    <property type="term" value="P:negative regulation of transcription by RNA polymerase II"/>
    <property type="evidence" value="ECO:0000314"/>
    <property type="project" value="BHF-UCL"/>
</dbReference>
<dbReference type="GO" id="GO:1904667">
    <property type="term" value="P:negative regulation of ubiquitin protein ligase activity"/>
    <property type="evidence" value="ECO:0000314"/>
    <property type="project" value="UniProtKB"/>
</dbReference>
<dbReference type="GO" id="GO:0045893">
    <property type="term" value="P:positive regulation of DNA-templated transcription"/>
    <property type="evidence" value="ECO:0000315"/>
    <property type="project" value="UniProtKB"/>
</dbReference>
<dbReference type="GO" id="GO:2001034">
    <property type="term" value="P:positive regulation of double-strand break repair via nonhomologous end joining"/>
    <property type="evidence" value="ECO:0000314"/>
    <property type="project" value="UniProtKB"/>
</dbReference>
<dbReference type="GO" id="GO:0045830">
    <property type="term" value="P:positive regulation of isotype switching"/>
    <property type="evidence" value="ECO:0000314"/>
    <property type="project" value="UniProtKB"/>
</dbReference>
<dbReference type="GO" id="GO:0033138">
    <property type="term" value="P:positive regulation of peptidyl-serine phosphorylation"/>
    <property type="evidence" value="ECO:0000314"/>
    <property type="project" value="UniProtKB"/>
</dbReference>
<dbReference type="GO" id="GO:0001558">
    <property type="term" value="P:regulation of cell growth"/>
    <property type="evidence" value="ECO:0000316"/>
    <property type="project" value="UniProtKB"/>
</dbReference>
<dbReference type="GO" id="GO:0002208">
    <property type="term" value="P:somatic diversification of immunoglobulins involved in immune response"/>
    <property type="evidence" value="ECO:0000303"/>
    <property type="project" value="ComplexPortal"/>
</dbReference>
<dbReference type="GO" id="GO:0043247">
    <property type="term" value="P:telomere maintenance in response to DNA damage"/>
    <property type="evidence" value="ECO:0000303"/>
    <property type="project" value="ComplexPortal"/>
</dbReference>
<dbReference type="FunFam" id="3.30.900.10:FF:000003">
    <property type="entry name" value="Mitotic spindle assembly checkpoint protein MAD2B"/>
    <property type="match status" value="1"/>
</dbReference>
<dbReference type="Gene3D" id="3.30.900.10">
    <property type="entry name" value="HORMA domain"/>
    <property type="match status" value="1"/>
</dbReference>
<dbReference type="IDEAL" id="IID00285"/>
<dbReference type="InterPro" id="IPR003511">
    <property type="entry name" value="HORMA_dom"/>
</dbReference>
<dbReference type="InterPro" id="IPR036570">
    <property type="entry name" value="HORMA_dom_sf"/>
</dbReference>
<dbReference type="InterPro" id="IPR045091">
    <property type="entry name" value="Mad2-like"/>
</dbReference>
<dbReference type="PANTHER" id="PTHR11842">
    <property type="entry name" value="MITOTIC SPINDLE ASSEMBLY CHECKPOINT PROTEIN MAD2"/>
    <property type="match status" value="1"/>
</dbReference>
<dbReference type="PANTHER" id="PTHR11842:SF15">
    <property type="entry name" value="MITOTIC SPINDLE ASSEMBLY CHECKPOINT PROTEIN MAD2B"/>
    <property type="match status" value="1"/>
</dbReference>
<dbReference type="Pfam" id="PF02301">
    <property type="entry name" value="HORMA"/>
    <property type="match status" value="1"/>
</dbReference>
<dbReference type="SUPFAM" id="SSF56019">
    <property type="entry name" value="The spindle assembly checkpoint protein mad2"/>
    <property type="match status" value="1"/>
</dbReference>
<dbReference type="PROSITE" id="PS50815">
    <property type="entry name" value="HORMA"/>
    <property type="match status" value="1"/>
</dbReference>
<accession>Q9UI95</accession>
<accession>B3KNE3</accession>
<accession>Q5TGW7</accession>
<accession>Q9UNA7</accession>
<accession>Q9Y6I6</accession>
<evidence type="ECO:0000255" key="1">
    <source>
        <dbReference type="PROSITE-ProRule" id="PRU00109"/>
    </source>
</evidence>
<evidence type="ECO:0000269" key="2">
    <source>
    </source>
</evidence>
<evidence type="ECO:0000269" key="3">
    <source>
    </source>
</evidence>
<evidence type="ECO:0000269" key="4">
    <source>
    </source>
</evidence>
<evidence type="ECO:0000269" key="5">
    <source>
    </source>
</evidence>
<evidence type="ECO:0000269" key="6">
    <source>
    </source>
</evidence>
<evidence type="ECO:0000269" key="7">
    <source>
    </source>
</evidence>
<evidence type="ECO:0000269" key="8">
    <source>
    </source>
</evidence>
<evidence type="ECO:0000269" key="9">
    <source>
    </source>
</evidence>
<evidence type="ECO:0000269" key="10">
    <source>
    </source>
</evidence>
<evidence type="ECO:0000269" key="11">
    <source>
    </source>
</evidence>
<evidence type="ECO:0000269" key="12">
    <source>
    </source>
</evidence>
<evidence type="ECO:0000269" key="13">
    <source>
    </source>
</evidence>
<evidence type="ECO:0000269" key="14">
    <source>
    </source>
</evidence>
<evidence type="ECO:0000269" key="15">
    <source>
    </source>
</evidence>
<evidence type="ECO:0000269" key="16">
    <source>
    </source>
</evidence>
<evidence type="ECO:0000269" key="17">
    <source>
    </source>
</evidence>
<evidence type="ECO:0000269" key="18">
    <source>
    </source>
</evidence>
<evidence type="ECO:0000269" key="19">
    <source>
    </source>
</evidence>
<evidence type="ECO:0000269" key="20">
    <source>
    </source>
</evidence>
<evidence type="ECO:0000305" key="21"/>
<evidence type="ECO:0007829" key="22">
    <source>
        <dbReference type="PDB" id="3ABE"/>
    </source>
</evidence>
<evidence type="ECO:0007829" key="23">
    <source>
        <dbReference type="PDB" id="5XPT"/>
    </source>
</evidence>
<evidence type="ECO:0007829" key="24">
    <source>
        <dbReference type="PDB" id="6BCD"/>
    </source>
</evidence>
<evidence type="ECO:0007829" key="25">
    <source>
        <dbReference type="PDB" id="6M7B"/>
    </source>
</evidence>